<sequence length="770" mass="87072">MLPGLALLLLAAWTARALEVPTDGNAGLLAEPQIAMFCGRLNMHMNVQNGKWDSDPSGTKTCIDTKEGILQYCQEVYPELQITNVVEANQPVTIQNWCKRGRKQCKTHPHFVIPYRCLVGEFVSDALLVPDKCKFLHQERMDVCETHLHWHTVAKETCSEKSTNLHDYGMLLPCGIDKFRGVEFVCCPLAEESDNVDSADAEEDDSDVWWGGADTDYADGSEDKVVEVAEEEEVAEVEEEEADDDEDDEDGDEVEEEAEEPYEEATERTTSIATTTTTTTESVEEVVREVCSEQAETGPCRAMISRWYFDVTEGKCAPFFYGGCGGNRNNFDTEEYCMAVCGSVMSQSLRKTTREPLTRDPVKLPTTAASTPDAVDKYLETPGDENEHAHFQKAKERLEAKHRERMSQVMREWEEAERQAKNLPKADKKAVIQHFQEKVESLEQEAANERQQLVETHMARVEAMLNDRRRLALENYITALQAVPPRPRHVFNMLKKYVRAEQKDRQHTLKHFEHVRMVDPKKAAQIRSQVMTHLRVIYERMNQSLSLLYNVPAVAEEIQDEVDELLQKEQNYSDDVLANMISEPRISYGNDALMPSLTETKTTVELLPVNGEFSLDDLQPWHSFGADSVPANTENEVEPVDARPAADRGLTTRPGSGLTNIKTEEISEVKMDAEFRHDSGYEVHHQKLVFFAEDVGSNKGAIIGLMVGGVVIATVIVITLVMLKKKQYTSIHHGVVEVDAAVTPEERHLSKMQQNGYENPTYKFFEQMQN</sequence>
<accession>P53601</accession>
<accession>Q60HH7</accession>
<accession>Q95KN7</accession>
<evidence type="ECO:0000250" key="1"/>
<evidence type="ECO:0000250" key="2">
    <source>
        <dbReference type="UniProtKB" id="P05067"/>
    </source>
</evidence>
<evidence type="ECO:0000250" key="3">
    <source>
        <dbReference type="UniProtKB" id="P08592"/>
    </source>
</evidence>
<evidence type="ECO:0000250" key="4">
    <source>
        <dbReference type="UniProtKB" id="P12023"/>
    </source>
</evidence>
<evidence type="ECO:0000255" key="5"/>
<evidence type="ECO:0000255" key="6">
    <source>
        <dbReference type="PROSITE-ProRule" id="PRU00031"/>
    </source>
</evidence>
<evidence type="ECO:0000255" key="7">
    <source>
        <dbReference type="PROSITE-ProRule" id="PRU01217"/>
    </source>
</evidence>
<evidence type="ECO:0000255" key="8">
    <source>
        <dbReference type="PROSITE-ProRule" id="PRU01218"/>
    </source>
</evidence>
<evidence type="ECO:0000256" key="9">
    <source>
        <dbReference type="SAM" id="MobiDB-lite"/>
    </source>
</evidence>
<evidence type="ECO:0000303" key="10">
    <source>
    </source>
</evidence>
<evidence type="ECO:0000303" key="11">
    <source ref="2"/>
</evidence>
<evidence type="ECO:0000305" key="12"/>
<protein>
    <recommendedName>
        <fullName evidence="2">Amyloid-beta precursor protein</fullName>
    </recommendedName>
    <alternativeName>
        <fullName>ABPP</fullName>
        <shortName>APP</shortName>
    </alternativeName>
    <alternativeName>
        <fullName>Alzheimer disease amyloid A4 protein homolog</fullName>
    </alternativeName>
    <alternativeName>
        <fullName>Alzheimer disease amyloid protein</fullName>
    </alternativeName>
    <alternativeName>
        <fullName evidence="12">Amyloid precursor protein</fullName>
    </alternativeName>
    <alternativeName>
        <fullName evidence="3">Amyloid-beta (A4) precursor protein</fullName>
    </alternativeName>
    <alternativeName>
        <fullName evidence="3">Amyloid-beta A4 protein</fullName>
    </alternativeName>
    <component>
        <recommendedName>
            <fullName>N-APP</fullName>
        </recommendedName>
    </component>
    <component>
        <recommendedName>
            <fullName>Soluble APP-alpha</fullName>
            <shortName>S-APP-alpha</shortName>
        </recommendedName>
    </component>
    <component>
        <recommendedName>
            <fullName>Soluble APP-beta</fullName>
            <shortName>S-APP-beta</shortName>
        </recommendedName>
    </component>
    <component>
        <recommendedName>
            <fullName>C99</fullName>
        </recommendedName>
        <alternativeName>
            <fullName>Beta-secretase C-terminal fragment</fullName>
            <shortName>Beta-CTF</shortName>
        </alternativeName>
    </component>
    <component>
        <recommendedName>
            <fullName>Amyloid-beta protein 42</fullName>
            <shortName>Abeta42</shortName>
        </recommendedName>
        <alternativeName>
            <fullName>Beta-APP42</fullName>
        </alternativeName>
    </component>
    <component>
        <recommendedName>
            <fullName>Amyloid-beta protein 40</fullName>
            <shortName>Abeta40</shortName>
        </recommendedName>
        <alternativeName>
            <fullName>Beta-APP40</fullName>
        </alternativeName>
    </component>
    <component>
        <recommendedName>
            <fullName>C83</fullName>
        </recommendedName>
        <alternativeName>
            <fullName>Alpha-secretase C-terminal fragment</fullName>
            <shortName>Alpha-CTF</shortName>
        </alternativeName>
    </component>
    <component>
        <recommendedName>
            <fullName>P3(42)</fullName>
        </recommendedName>
    </component>
    <component>
        <recommendedName>
            <fullName>P3(40)</fullName>
        </recommendedName>
    </component>
    <component>
        <recommendedName>
            <fullName>C80</fullName>
        </recommendedName>
    </component>
    <component>
        <recommendedName>
            <fullName>Gamma-secretase C-terminal fragment 59</fullName>
        </recommendedName>
        <alternativeName>
            <fullName>Gamma-CTF(59)</fullName>
        </alternativeName>
    </component>
    <component>
        <recommendedName>
            <fullName>Gamma-secretase C-terminal fragment 57</fullName>
        </recommendedName>
        <alternativeName>
            <fullName>Gamma-CTF(57)</fullName>
        </alternativeName>
    </component>
    <component>
        <recommendedName>
            <fullName>Gamma-secretase C-terminal fragment 50</fullName>
        </recommendedName>
        <alternativeName>
            <fullName>Gamma-CTF(50)</fullName>
        </alternativeName>
    </component>
    <component>
        <recommendedName>
            <fullName>C31</fullName>
        </recommendedName>
    </component>
</protein>
<reference key="1">
    <citation type="journal article" date="1991" name="Am. J. Pathol.">
        <title>Homology of the amyloid beta protein precursor in monkey and human supports a primate model for beta amyloidosis in Alzheimer's disease.</title>
        <authorList>
            <person name="Podlisny M.B."/>
            <person name="Tolan D.R."/>
            <person name="Selkoe D.J."/>
        </authorList>
    </citation>
    <scope>NUCLEOTIDE SEQUENCE [MRNA] (ISOFORMS APP695 AND APP770)</scope>
    <source>
        <tissue>Cerebellum</tissue>
    </source>
</reference>
<reference key="2">
    <citation type="submission" date="2003-10" db="EMBL/GenBank/DDBJ databases">
        <title>Isolation and characterization of cDNA for macaque neurological disease genes.</title>
        <authorList>
            <person name="Kusuda J."/>
            <person name="Osada N."/>
            <person name="Tanuma R."/>
            <person name="Hirata M."/>
            <person name="Sugano S."/>
            <person name="Hashimoto K."/>
        </authorList>
    </citation>
    <scope>NUCLEOTIDE SEQUENCE [LARGE SCALE MRNA] (ISOFORM 3)</scope>
    <source>
        <tissue>Brain cortex</tissue>
    </source>
</reference>
<keyword id="KW-0025">Alternative splicing</keyword>
<keyword id="KW-0034">Amyloid</keyword>
<keyword id="KW-0053">Apoptosis</keyword>
<keyword id="KW-0130">Cell adhesion</keyword>
<keyword id="KW-1003">Cell membrane</keyword>
<keyword id="KW-0966">Cell projection</keyword>
<keyword id="KW-0168">Coated pit</keyword>
<keyword id="KW-0186">Copper</keyword>
<keyword id="KW-0963">Cytoplasm</keyword>
<keyword id="KW-0968">Cytoplasmic vesicle</keyword>
<keyword id="KW-1015">Disulfide bond</keyword>
<keyword id="KW-0254">Endocytosis</keyword>
<keyword id="KW-0256">Endoplasmic reticulum</keyword>
<keyword id="KW-0967">Endosome</keyword>
<keyword id="KW-0325">Glycoprotein</keyword>
<keyword id="KW-0333">Golgi apparatus</keyword>
<keyword id="KW-0358">Heparin-binding</keyword>
<keyword id="KW-0408">Iron</keyword>
<keyword id="KW-1017">Isopeptide bond</keyword>
<keyword id="KW-0472">Membrane</keyword>
<keyword id="KW-0479">Metal-binding</keyword>
<keyword id="KW-0914">Notch signaling pathway</keyword>
<keyword id="KW-0539">Nucleus</keyword>
<keyword id="KW-0597">Phosphoprotein</keyword>
<keyword id="KW-0646">Protease inhibitor</keyword>
<keyword id="KW-0654">Proteoglycan</keyword>
<keyword id="KW-1185">Reference proteome</keyword>
<keyword id="KW-0964">Secreted</keyword>
<keyword id="KW-0722">Serine protease inhibitor</keyword>
<keyword id="KW-0732">Signal</keyword>
<keyword id="KW-0765">Sulfation</keyword>
<keyword id="KW-0812">Transmembrane</keyword>
<keyword id="KW-1133">Transmembrane helix</keyword>
<keyword id="KW-0832">Ubl conjugation</keyword>
<keyword id="KW-0862">Zinc</keyword>
<feature type="signal peptide" evidence="2">
    <location>
        <begin position="1"/>
        <end position="17"/>
    </location>
</feature>
<feature type="chain" id="PRO_0000000101" description="Amyloid-beta precursor protein">
    <location>
        <begin position="18"/>
        <end position="770"/>
    </location>
</feature>
<feature type="chain" id="PRO_0000000102" description="Soluble APP-alpha" evidence="5">
    <location>
        <begin position="18"/>
        <end position="687"/>
    </location>
</feature>
<feature type="chain" id="PRO_0000000103" description="Soluble APP-beta" evidence="5">
    <location>
        <begin position="18"/>
        <end position="671"/>
    </location>
</feature>
<feature type="chain" id="PRO_0000381967" description="N-APP" evidence="1">
    <location>
        <begin position="18"/>
        <end position="286"/>
    </location>
</feature>
<feature type="chain" id="PRO_0000000104" description="C99" evidence="5">
    <location>
        <begin position="672"/>
        <end position="770"/>
    </location>
</feature>
<feature type="chain" id="PRO_0000000105" description="Amyloid-beta protein 42" evidence="2">
    <location>
        <begin position="672"/>
        <end position="713"/>
    </location>
</feature>
<feature type="chain" id="PRO_0000000106" description="Amyloid-beta protein 40" evidence="2">
    <location>
        <begin position="672"/>
        <end position="711"/>
    </location>
</feature>
<feature type="chain" id="PRO_0000000107" description="C83" evidence="5">
    <location>
        <begin position="688"/>
        <end position="770"/>
    </location>
</feature>
<feature type="peptide" id="PRO_0000000108" description="P3(42)" evidence="5">
    <location>
        <begin position="688"/>
        <end position="713"/>
    </location>
</feature>
<feature type="peptide" id="PRO_0000000109" description="P3(40)" evidence="5">
    <location>
        <begin position="688"/>
        <end position="711"/>
    </location>
</feature>
<feature type="chain" id="PRO_0000384575" description="C80">
    <location>
        <begin position="691"/>
        <end position="770"/>
    </location>
</feature>
<feature type="chain" id="PRO_0000000110" description="Gamma-secretase C-terminal fragment 59" evidence="5">
    <location>
        <begin position="712"/>
        <end position="770"/>
    </location>
</feature>
<feature type="chain" id="PRO_0000000111" description="Gamma-secretase C-terminal fragment 57" evidence="5">
    <location>
        <begin position="714"/>
        <end position="770"/>
    </location>
</feature>
<feature type="chain" id="PRO_0000000112" description="Gamma-secretase C-terminal fragment 50" evidence="5">
    <location>
        <begin position="721"/>
        <end position="770"/>
    </location>
</feature>
<feature type="chain" id="PRO_0000000113" description="C31" evidence="5">
    <location>
        <begin position="740"/>
        <end position="770"/>
    </location>
</feature>
<feature type="topological domain" description="Extracellular" evidence="12">
    <location>
        <begin position="18"/>
        <end position="701"/>
    </location>
</feature>
<feature type="transmembrane region" description="Helical" evidence="2">
    <location>
        <begin position="702"/>
        <end position="722"/>
    </location>
</feature>
<feature type="topological domain" description="Cytoplasmic" evidence="12">
    <location>
        <begin position="723"/>
        <end position="770"/>
    </location>
</feature>
<feature type="domain" description="E1" evidence="7">
    <location>
        <begin position="28"/>
        <end position="189"/>
    </location>
</feature>
<feature type="domain" description="BPTI/Kunitz inhibitor" evidence="6">
    <location>
        <begin position="291"/>
        <end position="341"/>
    </location>
</feature>
<feature type="domain" description="E2" evidence="8">
    <location>
        <begin position="374"/>
        <end position="565"/>
    </location>
</feature>
<feature type="region of interest" description="GFLD subdomain" evidence="7">
    <location>
        <begin position="28"/>
        <end position="123"/>
    </location>
</feature>
<feature type="region of interest" description="CuBD subdomain" evidence="7">
    <location>
        <begin position="131"/>
        <end position="189"/>
    </location>
</feature>
<feature type="region of interest" description="Zinc-binding" evidence="1">
    <location>
        <begin position="181"/>
        <end position="188"/>
    </location>
</feature>
<feature type="region of interest" description="Disordered" evidence="9">
    <location>
        <begin position="194"/>
        <end position="284"/>
    </location>
</feature>
<feature type="region of interest" description="Heparin-binding" evidence="1">
    <location>
        <begin position="391"/>
        <end position="423"/>
    </location>
</feature>
<feature type="region of interest" description="Heparin-binding" evidence="1">
    <location>
        <begin position="491"/>
        <end position="522"/>
    </location>
</feature>
<feature type="region of interest" description="Collagen-binding" evidence="2">
    <location>
        <begin position="523"/>
        <end position="540"/>
    </location>
</feature>
<feature type="region of interest" description="Interaction with PSEN1" evidence="2">
    <location>
        <begin position="695"/>
        <end position="722"/>
    </location>
</feature>
<feature type="region of interest" description="Interaction with G(o)-alpha" evidence="1">
    <location>
        <begin position="732"/>
        <end position="751"/>
    </location>
</feature>
<feature type="region of interest" description="Required for the interaction with KIF5B and for anterograde transport in axons" evidence="2">
    <location>
        <begin position="756"/>
        <end position="770"/>
    </location>
</feature>
<feature type="short sequence motif" description="OX-2" evidence="2">
    <location>
        <begin position="344"/>
        <end position="365"/>
    </location>
</feature>
<feature type="short sequence motif" description="Basolateral sorting signal" evidence="1">
    <location>
        <begin position="724"/>
        <end position="734"/>
    </location>
</feature>
<feature type="short sequence motif" description="YENPXY motif; contains endocytosis signal" evidence="2">
    <location>
        <begin position="757"/>
        <end position="762"/>
    </location>
</feature>
<feature type="compositionally biased region" description="Acidic residues" evidence="9">
    <location>
        <begin position="194"/>
        <end position="207"/>
    </location>
</feature>
<feature type="compositionally biased region" description="Acidic residues" evidence="9">
    <location>
        <begin position="228"/>
        <end position="264"/>
    </location>
</feature>
<feature type="compositionally biased region" description="Low complexity" evidence="9">
    <location>
        <begin position="268"/>
        <end position="281"/>
    </location>
</feature>
<feature type="binding site" evidence="2">
    <location>
        <begin position="96"/>
        <end position="110"/>
    </location>
    <ligand>
        <name>heparin</name>
        <dbReference type="ChEBI" id="CHEBI:28304"/>
    </ligand>
</feature>
<feature type="binding site" evidence="7">
    <location>
        <position position="147"/>
    </location>
    <ligand>
        <name>Cu(2+)</name>
        <dbReference type="ChEBI" id="CHEBI:29036"/>
        <label>1</label>
    </ligand>
</feature>
<feature type="binding site" evidence="7">
    <location>
        <position position="151"/>
    </location>
    <ligand>
        <name>Cu(2+)</name>
        <dbReference type="ChEBI" id="CHEBI:29036"/>
        <label>1</label>
    </ligand>
</feature>
<feature type="binding site" evidence="7">
    <location>
        <position position="168"/>
    </location>
    <ligand>
        <name>Cu(2+)</name>
        <dbReference type="ChEBI" id="CHEBI:29036"/>
        <label>1</label>
    </ligand>
</feature>
<feature type="binding site" evidence="2">
    <location>
        <position position="183"/>
    </location>
    <ligand>
        <name>Zn(2+)</name>
        <dbReference type="ChEBI" id="CHEBI:29105"/>
        <label>1</label>
    </ligand>
</feature>
<feature type="binding site" evidence="2">
    <location>
        <position position="186"/>
    </location>
    <ligand>
        <name>Zn(2+)</name>
        <dbReference type="ChEBI" id="CHEBI:29105"/>
        <label>1</label>
    </ligand>
</feature>
<feature type="binding site" evidence="2">
    <location>
        <position position="187"/>
    </location>
    <ligand>
        <name>Zn(2+)</name>
        <dbReference type="ChEBI" id="CHEBI:29105"/>
        <label>1</label>
    </ligand>
</feature>
<feature type="binding site" evidence="2">
    <location>
        <position position="677"/>
    </location>
    <ligand>
        <name>Cu(2+)</name>
        <dbReference type="ChEBI" id="CHEBI:29036"/>
        <label>2</label>
    </ligand>
</feature>
<feature type="binding site" evidence="2">
    <location>
        <position position="677"/>
    </location>
    <ligand>
        <name>Zn(2+)</name>
        <dbReference type="ChEBI" id="CHEBI:29105"/>
        <label>2</label>
    </ligand>
</feature>
<feature type="binding site" evidence="2">
    <location>
        <position position="681"/>
    </location>
    <ligand>
        <name>Cu(2+)</name>
        <dbReference type="ChEBI" id="CHEBI:29036"/>
        <label>2</label>
    </ligand>
</feature>
<feature type="binding site" evidence="2">
    <location>
        <position position="681"/>
    </location>
    <ligand>
        <name>Zn(2+)</name>
        <dbReference type="ChEBI" id="CHEBI:29105"/>
        <label>2</label>
    </ligand>
</feature>
<feature type="binding site" evidence="2">
    <location>
        <position position="684"/>
    </location>
    <ligand>
        <name>Cu(2+)</name>
        <dbReference type="ChEBI" id="CHEBI:29036"/>
        <label>2</label>
    </ligand>
</feature>
<feature type="binding site" evidence="2">
    <location>
        <position position="684"/>
    </location>
    <ligand>
        <name>Zn(2+)</name>
        <dbReference type="ChEBI" id="CHEBI:29105"/>
        <label>2</label>
    </ligand>
</feature>
<feature type="binding site" evidence="2">
    <location>
        <position position="685"/>
    </location>
    <ligand>
        <name>Cu(2+)</name>
        <dbReference type="ChEBI" id="CHEBI:29036"/>
        <label>2</label>
    </ligand>
</feature>
<feature type="binding site" evidence="2">
    <location>
        <position position="685"/>
    </location>
    <ligand>
        <name>Zn(2+)</name>
        <dbReference type="ChEBI" id="CHEBI:29105"/>
        <label>2</label>
    </ligand>
</feature>
<feature type="site" description="Required for Cu(2+) reduction" evidence="7">
    <location>
        <position position="170"/>
    </location>
</feature>
<feature type="site" description="Cleavage; by caspases" evidence="2">
    <location>
        <begin position="197"/>
        <end position="198"/>
    </location>
</feature>
<feature type="site" description="Cleavage; by caspases" evidence="2">
    <location>
        <begin position="219"/>
        <end position="220"/>
    </location>
</feature>
<feature type="site" description="Reactive bond" evidence="1">
    <location>
        <begin position="301"/>
        <end position="302"/>
    </location>
</feature>
<feature type="site" description="Cleavage; by beta-secretase" evidence="2">
    <location>
        <begin position="671"/>
        <end position="672"/>
    </location>
</feature>
<feature type="site" description="Cleavage; by ACE" evidence="2">
    <location>
        <begin position="678"/>
        <end position="679"/>
    </location>
</feature>
<feature type="site" description="Cleavage; by alpha-secretase" evidence="3">
    <location>
        <begin position="687"/>
        <end position="688"/>
    </location>
</feature>
<feature type="site" description="Cleavage; by theta-secretase" evidence="3">
    <location>
        <begin position="690"/>
        <end position="691"/>
    </location>
</feature>
<feature type="site" description="Implicated in free radical propagation" evidence="1">
    <location>
        <position position="704"/>
    </location>
</feature>
<feature type="site" description="Susceptible to oxidation" evidence="2">
    <location>
        <position position="706"/>
    </location>
</feature>
<feature type="site" description="Cleavage; by gamma-secretase; site 1" evidence="3">
    <location>
        <begin position="711"/>
        <end position="712"/>
    </location>
</feature>
<feature type="site" description="Cleavage; by gamma-secretase; site 2" evidence="2">
    <location>
        <begin position="713"/>
        <end position="714"/>
    </location>
</feature>
<feature type="site" description="Cleavage; by gamma-secretase; site 3" evidence="2">
    <location>
        <begin position="720"/>
        <end position="721"/>
    </location>
</feature>
<feature type="site" description="Cleavage; by a caspase" evidence="2">
    <location>
        <begin position="739"/>
        <end position="740"/>
    </location>
</feature>
<feature type="modified residue" description="Phosphoserine; by CK2" evidence="2">
    <location>
        <position position="198"/>
    </location>
</feature>
<feature type="modified residue" description="Phosphoserine; by CK1" evidence="2">
    <location>
        <position position="206"/>
    </location>
</feature>
<feature type="modified residue" description="Sulfotyrosine" evidence="5">
    <location>
        <position position="217"/>
    </location>
</feature>
<feature type="modified residue" description="Sulfotyrosine" evidence="5">
    <location>
        <position position="262"/>
    </location>
</feature>
<feature type="modified residue" description="Sulfotyrosine" evidence="5">
    <location>
        <position position="336"/>
    </location>
</feature>
<feature type="modified residue" description="Phosphoserine" evidence="2">
    <location>
        <position position="441"/>
    </location>
</feature>
<feature type="modified residue" description="Phosphotyrosine" evidence="2">
    <location>
        <position position="497"/>
    </location>
</feature>
<feature type="modified residue" description="Phosphothreonine" evidence="3">
    <location>
        <position position="729"/>
    </location>
</feature>
<feature type="modified residue" description="Phosphoserine; by APP-kinase I" evidence="3">
    <location>
        <position position="730"/>
    </location>
</feature>
<feature type="modified residue" description="Phosphothreonine; by CDK5 and MAPK10" evidence="2">
    <location>
        <position position="743"/>
    </location>
</feature>
<feature type="modified residue" description="Phosphotyrosine; by ABL1" evidence="4">
    <location>
        <position position="757"/>
    </location>
</feature>
<feature type="glycosylation site" description="N-linked (GlcNAc...) asparagine" evidence="12">
    <location>
        <position position="542"/>
    </location>
</feature>
<feature type="glycosylation site" description="N-linked (GlcNAc...) asparagine" evidence="12">
    <location>
        <position position="571"/>
    </location>
</feature>
<feature type="disulfide bond" evidence="7">
    <location>
        <begin position="38"/>
        <end position="62"/>
    </location>
</feature>
<feature type="disulfide bond" evidence="7">
    <location>
        <begin position="73"/>
        <end position="117"/>
    </location>
</feature>
<feature type="disulfide bond" evidence="7">
    <location>
        <begin position="98"/>
        <end position="105"/>
    </location>
</feature>
<feature type="disulfide bond" evidence="7">
    <location>
        <begin position="133"/>
        <end position="187"/>
    </location>
</feature>
<feature type="disulfide bond" evidence="7">
    <location>
        <begin position="144"/>
        <end position="174"/>
    </location>
</feature>
<feature type="disulfide bond" evidence="7">
    <location>
        <begin position="158"/>
        <end position="186"/>
    </location>
</feature>
<feature type="disulfide bond" evidence="6">
    <location>
        <begin position="291"/>
        <end position="341"/>
    </location>
</feature>
<feature type="disulfide bond" evidence="6">
    <location>
        <begin position="300"/>
        <end position="324"/>
    </location>
</feature>
<feature type="disulfide bond" evidence="6">
    <location>
        <begin position="316"/>
        <end position="337"/>
    </location>
</feature>
<feature type="cross-link" description="Glycyl lysine isopeptide (Lys-Gly) (interchain with G-Cter in ubiquitin)" evidence="3">
    <location>
        <position position="763"/>
    </location>
</feature>
<feature type="splice variant" id="VSP_000010" description="In isoform APP695." evidence="10">
    <original>E</original>
    <variation>V</variation>
    <location>
        <position position="289"/>
    </location>
</feature>
<feature type="splice variant" id="VSP_000011" description="In isoform APP695." evidence="10">
    <location>
        <begin position="290"/>
        <end position="345"/>
    </location>
</feature>
<feature type="splice variant" id="VSP_013360" description="In isoform 3." evidence="11">
    <original>M</original>
    <variation>I</variation>
    <location>
        <position position="345"/>
    </location>
</feature>
<feature type="splice variant" id="VSP_013361" description="In isoform 3." evidence="11">
    <location>
        <begin position="346"/>
        <end position="364"/>
    </location>
</feature>
<feature type="sequence conflict" description="In Ref. 2; BAD51938." evidence="12" ref="2">
    <original>M</original>
    <variation>T</variation>
    <location>
        <position position="464"/>
    </location>
</feature>
<dbReference type="EMBL" id="M58726">
    <property type="protein sequence ID" value="AAA36828.1"/>
    <property type="molecule type" value="mRNA"/>
</dbReference>
<dbReference type="EMBL" id="M58727">
    <property type="protein sequence ID" value="AAA36829.1"/>
    <property type="molecule type" value="mRNA"/>
</dbReference>
<dbReference type="EMBL" id="AB125150">
    <property type="protein sequence ID" value="BAD51938.1"/>
    <property type="molecule type" value="mRNA"/>
</dbReference>
<dbReference type="PIR" id="A49795">
    <property type="entry name" value="A49795"/>
</dbReference>
<dbReference type="RefSeq" id="XP_005548940.1">
    <property type="nucleotide sequence ID" value="XM_005548883.2"/>
</dbReference>
<dbReference type="RefSeq" id="XP_005548942.1">
    <property type="nucleotide sequence ID" value="XM_005548885.2"/>
</dbReference>
<dbReference type="RefSeq" id="XP_005548944.1">
    <property type="nucleotide sequence ID" value="XM_005548887.2"/>
</dbReference>
<dbReference type="BMRB" id="P53601"/>
<dbReference type="SMR" id="P53601"/>
<dbReference type="STRING" id="9541.ENSMFAP00000007885"/>
<dbReference type="MEROPS" id="I02.015"/>
<dbReference type="GlyCosmos" id="P53601">
    <property type="glycosylation" value="2 sites, No reported glycans"/>
</dbReference>
<dbReference type="Ensembl" id="ENSMFAT00000026579.2">
    <molecule id="P53601-1"/>
    <property type="protein sequence ID" value="ENSMFAP00000007885.1"/>
    <property type="gene ID" value="ENSMFAG00000002479.2"/>
</dbReference>
<dbReference type="Ensembl" id="ENSMFAT00000026581.2">
    <molecule id="P53601-3"/>
    <property type="protein sequence ID" value="ENSMFAP00000007887.2"/>
    <property type="gene ID" value="ENSMFAG00000002479.2"/>
</dbReference>
<dbReference type="GeneID" id="101926433"/>
<dbReference type="KEGG" id="mcf:101926433"/>
<dbReference type="CTD" id="351"/>
<dbReference type="VEuPathDB" id="HostDB:ENSMFAG00000002479"/>
<dbReference type="eggNOG" id="KOG3540">
    <property type="taxonomic scope" value="Eukaryota"/>
</dbReference>
<dbReference type="GeneTree" id="ENSGT00530000063252"/>
<dbReference type="OMA" id="THRVQKC"/>
<dbReference type="OrthoDB" id="11720at314294"/>
<dbReference type="Proteomes" id="UP000233100">
    <property type="component" value="Chromosome 3"/>
</dbReference>
<dbReference type="Bgee" id="ENSMFAG00000002479">
    <property type="expression patterns" value="Expressed in frontal cortex and 13 other cell types or tissues"/>
</dbReference>
<dbReference type="GO" id="GO:0106003">
    <property type="term" value="C:amyloid-beta complex"/>
    <property type="evidence" value="ECO:0007669"/>
    <property type="project" value="Ensembl"/>
</dbReference>
<dbReference type="GO" id="GO:0030424">
    <property type="term" value="C:axon"/>
    <property type="evidence" value="ECO:0000250"/>
    <property type="project" value="UniProtKB"/>
</dbReference>
<dbReference type="GO" id="GO:0009986">
    <property type="term" value="C:cell surface"/>
    <property type="evidence" value="ECO:0007669"/>
    <property type="project" value="UniProtKB-SubCell"/>
</dbReference>
<dbReference type="GO" id="GO:0005905">
    <property type="term" value="C:clathrin-coated pit"/>
    <property type="evidence" value="ECO:0007669"/>
    <property type="project" value="UniProtKB-SubCell"/>
</dbReference>
<dbReference type="GO" id="GO:0005737">
    <property type="term" value="C:cytoplasm"/>
    <property type="evidence" value="ECO:0000250"/>
    <property type="project" value="UniProtKB"/>
</dbReference>
<dbReference type="GO" id="GO:0043198">
    <property type="term" value="C:dendritic shaft"/>
    <property type="evidence" value="ECO:0007669"/>
    <property type="project" value="Ensembl"/>
</dbReference>
<dbReference type="GO" id="GO:0043197">
    <property type="term" value="C:dendritic spine"/>
    <property type="evidence" value="ECO:0007669"/>
    <property type="project" value="Ensembl"/>
</dbReference>
<dbReference type="GO" id="GO:0005769">
    <property type="term" value="C:early endosome"/>
    <property type="evidence" value="ECO:0000250"/>
    <property type="project" value="UniProtKB"/>
</dbReference>
<dbReference type="GO" id="GO:0031901">
    <property type="term" value="C:early endosome membrane"/>
    <property type="evidence" value="ECO:0007669"/>
    <property type="project" value="Ensembl"/>
</dbReference>
<dbReference type="GO" id="GO:0005783">
    <property type="term" value="C:endoplasmic reticulum"/>
    <property type="evidence" value="ECO:0000250"/>
    <property type="project" value="UniProtKB"/>
</dbReference>
<dbReference type="GO" id="GO:0005615">
    <property type="term" value="C:extracellular space"/>
    <property type="evidence" value="ECO:0007669"/>
    <property type="project" value="Ensembl"/>
</dbReference>
<dbReference type="GO" id="GO:0005794">
    <property type="term" value="C:Golgi apparatus"/>
    <property type="evidence" value="ECO:0000250"/>
    <property type="project" value="UniProtKB"/>
</dbReference>
<dbReference type="GO" id="GO:0005798">
    <property type="term" value="C:Golgi-associated vesicle"/>
    <property type="evidence" value="ECO:0000250"/>
    <property type="project" value="UniProtKB"/>
</dbReference>
<dbReference type="GO" id="GO:0030426">
    <property type="term" value="C:growth cone"/>
    <property type="evidence" value="ECO:0007669"/>
    <property type="project" value="UniProtKB-SubCell"/>
</dbReference>
<dbReference type="GO" id="GO:0016020">
    <property type="term" value="C:membrane"/>
    <property type="evidence" value="ECO:0000250"/>
    <property type="project" value="UniProtKB"/>
</dbReference>
<dbReference type="GO" id="GO:0045121">
    <property type="term" value="C:membrane raft"/>
    <property type="evidence" value="ECO:0007669"/>
    <property type="project" value="Ensembl"/>
</dbReference>
<dbReference type="GO" id="GO:0005641">
    <property type="term" value="C:nuclear envelope lumen"/>
    <property type="evidence" value="ECO:0007669"/>
    <property type="project" value="Ensembl"/>
</dbReference>
<dbReference type="GO" id="GO:0043204">
    <property type="term" value="C:perikaryon"/>
    <property type="evidence" value="ECO:0007669"/>
    <property type="project" value="UniProtKB-SubCell"/>
</dbReference>
<dbReference type="GO" id="GO:0048471">
    <property type="term" value="C:perinuclear region of cytoplasm"/>
    <property type="evidence" value="ECO:0007669"/>
    <property type="project" value="Ensembl"/>
</dbReference>
<dbReference type="GO" id="GO:0005886">
    <property type="term" value="C:plasma membrane"/>
    <property type="evidence" value="ECO:0007669"/>
    <property type="project" value="UniProtKB-SubCell"/>
</dbReference>
<dbReference type="GO" id="GO:0043235">
    <property type="term" value="C:receptor complex"/>
    <property type="evidence" value="ECO:0007669"/>
    <property type="project" value="Ensembl"/>
</dbReference>
<dbReference type="GO" id="GO:0055037">
    <property type="term" value="C:recycling endosome"/>
    <property type="evidence" value="ECO:0000250"/>
    <property type="project" value="UniProtKB"/>
</dbReference>
<dbReference type="GO" id="GO:0003677">
    <property type="term" value="F:DNA binding"/>
    <property type="evidence" value="ECO:0000250"/>
    <property type="project" value="UniProtKB"/>
</dbReference>
<dbReference type="GO" id="GO:0008201">
    <property type="term" value="F:heparin binding"/>
    <property type="evidence" value="ECO:0007669"/>
    <property type="project" value="UniProtKB-KW"/>
</dbReference>
<dbReference type="GO" id="GO:0042802">
    <property type="term" value="F:identical protein binding"/>
    <property type="evidence" value="ECO:0007669"/>
    <property type="project" value="Ensembl"/>
</dbReference>
<dbReference type="GO" id="GO:0120283">
    <property type="term" value="F:protein serine/threonine kinase binding"/>
    <property type="evidence" value="ECO:0007669"/>
    <property type="project" value="Ensembl"/>
</dbReference>
<dbReference type="GO" id="GO:0051425">
    <property type="term" value="F:PTB domain binding"/>
    <property type="evidence" value="ECO:0007669"/>
    <property type="project" value="Ensembl"/>
</dbReference>
<dbReference type="GO" id="GO:0048018">
    <property type="term" value="F:receptor ligand activity"/>
    <property type="evidence" value="ECO:0007669"/>
    <property type="project" value="Ensembl"/>
</dbReference>
<dbReference type="GO" id="GO:0004867">
    <property type="term" value="F:serine-type endopeptidase inhibitor activity"/>
    <property type="evidence" value="ECO:0007669"/>
    <property type="project" value="UniProtKB-KW"/>
</dbReference>
<dbReference type="GO" id="GO:0046914">
    <property type="term" value="F:transition metal ion binding"/>
    <property type="evidence" value="ECO:0007669"/>
    <property type="project" value="InterPro"/>
</dbReference>
<dbReference type="GO" id="GO:0008344">
    <property type="term" value="P:adult locomotory behavior"/>
    <property type="evidence" value="ECO:0000250"/>
    <property type="project" value="UniProtKB"/>
</dbReference>
<dbReference type="GO" id="GO:1990000">
    <property type="term" value="P:amyloid fibril formation"/>
    <property type="evidence" value="ECO:0007669"/>
    <property type="project" value="Ensembl"/>
</dbReference>
<dbReference type="GO" id="GO:0006915">
    <property type="term" value="P:apoptotic process"/>
    <property type="evidence" value="ECO:0007669"/>
    <property type="project" value="UniProtKB-KW"/>
</dbReference>
<dbReference type="GO" id="GO:0002265">
    <property type="term" value="P:astrocyte activation involved in immune response"/>
    <property type="evidence" value="ECO:0007669"/>
    <property type="project" value="Ensembl"/>
</dbReference>
<dbReference type="GO" id="GO:0008088">
    <property type="term" value="P:axo-dendritic transport"/>
    <property type="evidence" value="ECO:0000250"/>
    <property type="project" value="UniProtKB"/>
</dbReference>
<dbReference type="GO" id="GO:0016199">
    <property type="term" value="P:axon midline choice point recognition"/>
    <property type="evidence" value="ECO:0000250"/>
    <property type="project" value="UniProtKB"/>
</dbReference>
<dbReference type="GO" id="GO:0007409">
    <property type="term" value="P:axonogenesis"/>
    <property type="evidence" value="ECO:0000250"/>
    <property type="project" value="UniProtKB"/>
</dbReference>
<dbReference type="GO" id="GO:0007155">
    <property type="term" value="P:cell adhesion"/>
    <property type="evidence" value="ECO:0007669"/>
    <property type="project" value="UniProtKB-KW"/>
</dbReference>
<dbReference type="GO" id="GO:1904646">
    <property type="term" value="P:cellular response to amyloid-beta"/>
    <property type="evidence" value="ECO:0007669"/>
    <property type="project" value="Ensembl"/>
</dbReference>
<dbReference type="GO" id="GO:0050890">
    <property type="term" value="P:cognition"/>
    <property type="evidence" value="ECO:0000250"/>
    <property type="project" value="UniProtKB"/>
</dbReference>
<dbReference type="GO" id="GO:0048669">
    <property type="term" value="P:collateral sprouting in absence of injury"/>
    <property type="evidence" value="ECO:0000250"/>
    <property type="project" value="UniProtKB"/>
</dbReference>
<dbReference type="GO" id="GO:0016358">
    <property type="term" value="P:dendrite development"/>
    <property type="evidence" value="ECO:0000250"/>
    <property type="project" value="UniProtKB"/>
</dbReference>
<dbReference type="GO" id="GO:0006897">
    <property type="term" value="P:endocytosis"/>
    <property type="evidence" value="ECO:0000250"/>
    <property type="project" value="UniProtKB"/>
</dbReference>
<dbReference type="GO" id="GO:0030198">
    <property type="term" value="P:extracellular matrix organization"/>
    <property type="evidence" value="ECO:0000250"/>
    <property type="project" value="UniProtKB"/>
</dbReference>
<dbReference type="GO" id="GO:0006878">
    <property type="term" value="P:intracellular copper ion homeostasis"/>
    <property type="evidence" value="ECO:0000250"/>
    <property type="project" value="UniProtKB"/>
</dbReference>
<dbReference type="GO" id="GO:0035235">
    <property type="term" value="P:ionotropic glutamate receptor signaling pathway"/>
    <property type="evidence" value="ECO:0000250"/>
    <property type="project" value="UniProtKB"/>
</dbReference>
<dbReference type="GO" id="GO:0007626">
    <property type="term" value="P:locomotory behavior"/>
    <property type="evidence" value="ECO:0000250"/>
    <property type="project" value="UniProtKB"/>
</dbReference>
<dbReference type="GO" id="GO:0007617">
    <property type="term" value="P:mating behavior"/>
    <property type="evidence" value="ECO:0000250"/>
    <property type="project" value="UniProtKB"/>
</dbReference>
<dbReference type="GO" id="GO:0014005">
    <property type="term" value="P:microglia development"/>
    <property type="evidence" value="ECO:0007669"/>
    <property type="project" value="Ensembl"/>
</dbReference>
<dbReference type="GO" id="GO:0001774">
    <property type="term" value="P:microglial cell activation"/>
    <property type="evidence" value="ECO:0007669"/>
    <property type="project" value="Ensembl"/>
</dbReference>
<dbReference type="GO" id="GO:0098815">
    <property type="term" value="P:modulation of excitatory postsynaptic potential"/>
    <property type="evidence" value="ECO:0007669"/>
    <property type="project" value="Ensembl"/>
</dbReference>
<dbReference type="GO" id="GO:0008285">
    <property type="term" value="P:negative regulation of cell population proliferation"/>
    <property type="evidence" value="ECO:0007669"/>
    <property type="project" value="Ensembl"/>
</dbReference>
<dbReference type="GO" id="GO:0010629">
    <property type="term" value="P:negative regulation of gene expression"/>
    <property type="evidence" value="ECO:0007669"/>
    <property type="project" value="Ensembl"/>
</dbReference>
<dbReference type="GO" id="GO:1900272">
    <property type="term" value="P:negative regulation of long-term synaptic potentiation"/>
    <property type="evidence" value="ECO:0007669"/>
    <property type="project" value="Ensembl"/>
</dbReference>
<dbReference type="GO" id="GO:0031175">
    <property type="term" value="P:neuron projection development"/>
    <property type="evidence" value="ECO:0000250"/>
    <property type="project" value="UniProtKB"/>
</dbReference>
<dbReference type="GO" id="GO:1990535">
    <property type="term" value="P:neuron projection maintenance"/>
    <property type="evidence" value="ECO:0007669"/>
    <property type="project" value="Ensembl"/>
</dbReference>
<dbReference type="GO" id="GO:0016322">
    <property type="term" value="P:neuron remodeling"/>
    <property type="evidence" value="ECO:0000250"/>
    <property type="project" value="UniProtKB"/>
</dbReference>
<dbReference type="GO" id="GO:0007219">
    <property type="term" value="P:Notch signaling pathway"/>
    <property type="evidence" value="ECO:0007669"/>
    <property type="project" value="UniProtKB-KW"/>
</dbReference>
<dbReference type="GO" id="GO:1905908">
    <property type="term" value="P:positive regulation of amyloid fibril formation"/>
    <property type="evidence" value="ECO:0007669"/>
    <property type="project" value="Ensembl"/>
</dbReference>
<dbReference type="GO" id="GO:0050850">
    <property type="term" value="P:positive regulation of calcium-mediated signaling"/>
    <property type="evidence" value="ECO:0007669"/>
    <property type="project" value="Ensembl"/>
</dbReference>
<dbReference type="GO" id="GO:0032722">
    <property type="term" value="P:positive regulation of chemokine production"/>
    <property type="evidence" value="ECO:0007669"/>
    <property type="project" value="Ensembl"/>
</dbReference>
<dbReference type="GO" id="GO:0070374">
    <property type="term" value="P:positive regulation of ERK1 and ERK2 cascade"/>
    <property type="evidence" value="ECO:0007669"/>
    <property type="project" value="Ensembl"/>
</dbReference>
<dbReference type="GO" id="GO:0045821">
    <property type="term" value="P:positive regulation of glycolytic process"/>
    <property type="evidence" value="ECO:0007669"/>
    <property type="project" value="Ensembl"/>
</dbReference>
<dbReference type="GO" id="GO:0050729">
    <property type="term" value="P:positive regulation of inflammatory response"/>
    <property type="evidence" value="ECO:0007669"/>
    <property type="project" value="Ensembl"/>
</dbReference>
<dbReference type="GO" id="GO:0032731">
    <property type="term" value="P:positive regulation of interleukin-1 beta production"/>
    <property type="evidence" value="ECO:0007669"/>
    <property type="project" value="Ensembl"/>
</dbReference>
<dbReference type="GO" id="GO:0032755">
    <property type="term" value="P:positive regulation of interleukin-6 production"/>
    <property type="evidence" value="ECO:0007669"/>
    <property type="project" value="Ensembl"/>
</dbReference>
<dbReference type="GO" id="GO:0046330">
    <property type="term" value="P:positive regulation of JNK cascade"/>
    <property type="evidence" value="ECO:0007669"/>
    <property type="project" value="Ensembl"/>
</dbReference>
<dbReference type="GO" id="GO:1900273">
    <property type="term" value="P:positive regulation of long-term synaptic potentiation"/>
    <property type="evidence" value="ECO:0007669"/>
    <property type="project" value="Ensembl"/>
</dbReference>
<dbReference type="GO" id="GO:0045931">
    <property type="term" value="P:positive regulation of mitotic cell cycle"/>
    <property type="evidence" value="ECO:0000250"/>
    <property type="project" value="UniProtKB"/>
</dbReference>
<dbReference type="GO" id="GO:1901224">
    <property type="term" value="P:positive regulation of non-canonical NF-kappaB signal transduction"/>
    <property type="evidence" value="ECO:0007669"/>
    <property type="project" value="Ensembl"/>
</dbReference>
<dbReference type="GO" id="GO:2000406">
    <property type="term" value="P:positive regulation of T cell migration"/>
    <property type="evidence" value="ECO:0007669"/>
    <property type="project" value="Ensembl"/>
</dbReference>
<dbReference type="GO" id="GO:0045944">
    <property type="term" value="P:positive regulation of transcription by RNA polymerase II"/>
    <property type="evidence" value="ECO:0007669"/>
    <property type="project" value="Ensembl"/>
</dbReference>
<dbReference type="GO" id="GO:0032760">
    <property type="term" value="P:positive regulation of tumor necrosis factor production"/>
    <property type="evidence" value="ECO:0007669"/>
    <property type="project" value="Ensembl"/>
</dbReference>
<dbReference type="GO" id="GO:0048169">
    <property type="term" value="P:regulation of long-term neuronal synaptic plasticity"/>
    <property type="evidence" value="ECO:0007669"/>
    <property type="project" value="Ensembl"/>
</dbReference>
<dbReference type="GO" id="GO:0040014">
    <property type="term" value="P:regulation of multicellular organism growth"/>
    <property type="evidence" value="ECO:0000250"/>
    <property type="project" value="UniProtKB"/>
</dbReference>
<dbReference type="GO" id="GO:1905606">
    <property type="term" value="P:regulation of presynapse assembly"/>
    <property type="evidence" value="ECO:0007669"/>
    <property type="project" value="Ensembl"/>
</dbReference>
<dbReference type="GO" id="GO:0150003">
    <property type="term" value="P:regulation of spontaneous synaptic transmission"/>
    <property type="evidence" value="ECO:0007669"/>
    <property type="project" value="Ensembl"/>
</dbReference>
<dbReference type="GO" id="GO:0050803">
    <property type="term" value="P:regulation of synapse structure or activity"/>
    <property type="evidence" value="ECO:0000250"/>
    <property type="project" value="UniProtKB"/>
</dbReference>
<dbReference type="GO" id="GO:0006417">
    <property type="term" value="P:regulation of translation"/>
    <property type="evidence" value="ECO:0000250"/>
    <property type="project" value="UniProtKB"/>
</dbReference>
<dbReference type="GO" id="GO:0050808">
    <property type="term" value="P:synapse organization"/>
    <property type="evidence" value="ECO:0007669"/>
    <property type="project" value="Ensembl"/>
</dbReference>
<dbReference type="GO" id="GO:0008542">
    <property type="term" value="P:visual learning"/>
    <property type="evidence" value="ECO:0000250"/>
    <property type="project" value="UniProtKB"/>
</dbReference>
<dbReference type="CDD" id="cd22607">
    <property type="entry name" value="Kunitz_ABPP-like"/>
    <property type="match status" value="1"/>
</dbReference>
<dbReference type="FunFam" id="3.30.1490.140:FF:000001">
    <property type="entry name" value="Amyloid beta (A4) protein b"/>
    <property type="match status" value="1"/>
</dbReference>
<dbReference type="FunFam" id="3.90.570.10:FF:000001">
    <property type="entry name" value="Amyloid beta A4 protein"/>
    <property type="match status" value="1"/>
</dbReference>
<dbReference type="FunFam" id="4.10.230.10:FF:000001">
    <property type="entry name" value="Amyloid beta A4 protein"/>
    <property type="match status" value="1"/>
</dbReference>
<dbReference type="FunFam" id="4.10.410.10:FF:000001">
    <property type="entry name" value="Amyloid beta A4 protein"/>
    <property type="match status" value="1"/>
</dbReference>
<dbReference type="FunFam" id="1.20.120.770:FF:000001">
    <property type="entry name" value="Amyloid beta A4 protein-like isoform 1"/>
    <property type="match status" value="1"/>
</dbReference>
<dbReference type="Gene3D" id="1.20.120.770">
    <property type="entry name" value="Amyloid precursor protein, E2 domain"/>
    <property type="match status" value="1"/>
</dbReference>
<dbReference type="Gene3D" id="4.10.230.10">
    <property type="entry name" value="Amyloidogenic glycoprotein, amyloid-beta peptide"/>
    <property type="match status" value="1"/>
</dbReference>
<dbReference type="Gene3D" id="3.30.1490.140">
    <property type="entry name" value="Amyloidogenic glycoprotein, copper-binding domain"/>
    <property type="match status" value="1"/>
</dbReference>
<dbReference type="Gene3D" id="3.90.570.10">
    <property type="entry name" value="Amyloidogenic glycoprotein, heparin-binding domain"/>
    <property type="match status" value="1"/>
</dbReference>
<dbReference type="Gene3D" id="4.10.410.10">
    <property type="entry name" value="Pancreatic trypsin inhibitor Kunitz domain"/>
    <property type="match status" value="1"/>
</dbReference>
<dbReference type="Gene3D" id="2.30.29.30">
    <property type="entry name" value="Pleckstrin-homology domain (PH domain)/Phosphotyrosine-binding domain (PTB)"/>
    <property type="match status" value="1"/>
</dbReference>
<dbReference type="InterPro" id="IPR036669">
    <property type="entry name" value="Amyloid_Cu-bd_sf"/>
</dbReference>
<dbReference type="InterPro" id="IPR008155">
    <property type="entry name" value="Amyloid_glyco"/>
</dbReference>
<dbReference type="InterPro" id="IPR013803">
    <property type="entry name" value="Amyloid_glyco_Abeta"/>
</dbReference>
<dbReference type="InterPro" id="IPR037071">
    <property type="entry name" value="Amyloid_glyco_Abeta_sf"/>
</dbReference>
<dbReference type="InterPro" id="IPR011178">
    <property type="entry name" value="Amyloid_glyco_Cu-bd"/>
</dbReference>
<dbReference type="InterPro" id="IPR024329">
    <property type="entry name" value="Amyloid_glyco_E2_domain"/>
</dbReference>
<dbReference type="InterPro" id="IPR008154">
    <property type="entry name" value="Amyloid_glyco_extra"/>
</dbReference>
<dbReference type="InterPro" id="IPR015849">
    <property type="entry name" value="Amyloid_glyco_heparin-bd"/>
</dbReference>
<dbReference type="InterPro" id="IPR036454">
    <property type="entry name" value="Amyloid_glyco_heparin-bd_sf"/>
</dbReference>
<dbReference type="InterPro" id="IPR019745">
    <property type="entry name" value="Amyloid_glyco_intracell_CS"/>
</dbReference>
<dbReference type="InterPro" id="IPR019543">
    <property type="entry name" value="APP_amyloid_C"/>
</dbReference>
<dbReference type="InterPro" id="IPR019744">
    <property type="entry name" value="APP_CUBD_CS"/>
</dbReference>
<dbReference type="InterPro" id="IPR036176">
    <property type="entry name" value="E2_sf"/>
</dbReference>
<dbReference type="InterPro" id="IPR002223">
    <property type="entry name" value="Kunitz_BPTI"/>
</dbReference>
<dbReference type="InterPro" id="IPR036880">
    <property type="entry name" value="Kunitz_BPTI_sf"/>
</dbReference>
<dbReference type="InterPro" id="IPR011993">
    <property type="entry name" value="PH-like_dom_sf"/>
</dbReference>
<dbReference type="InterPro" id="IPR020901">
    <property type="entry name" value="Prtase_inh_Kunz-CS"/>
</dbReference>
<dbReference type="PANTHER" id="PTHR23103">
    <property type="entry name" value="ALZHEIMER'S DISEASE BETA-AMYLOID RELATED"/>
    <property type="match status" value="1"/>
</dbReference>
<dbReference type="PANTHER" id="PTHR23103:SF7">
    <property type="entry name" value="AMYLOID-BETA PRECURSOR PROTEIN"/>
    <property type="match status" value="1"/>
</dbReference>
<dbReference type="Pfam" id="PF10515">
    <property type="entry name" value="APP_amyloid"/>
    <property type="match status" value="1"/>
</dbReference>
<dbReference type="Pfam" id="PF12924">
    <property type="entry name" value="APP_Cu_bd"/>
    <property type="match status" value="1"/>
</dbReference>
<dbReference type="Pfam" id="PF12925">
    <property type="entry name" value="APP_E2"/>
    <property type="match status" value="1"/>
</dbReference>
<dbReference type="Pfam" id="PF02177">
    <property type="entry name" value="APP_N"/>
    <property type="match status" value="1"/>
</dbReference>
<dbReference type="Pfam" id="PF03494">
    <property type="entry name" value="Beta-APP"/>
    <property type="match status" value="1"/>
</dbReference>
<dbReference type="Pfam" id="PF00014">
    <property type="entry name" value="Kunitz_BPTI"/>
    <property type="match status" value="1"/>
</dbReference>
<dbReference type="PRINTS" id="PR00203">
    <property type="entry name" value="AMYLOIDA4"/>
</dbReference>
<dbReference type="PRINTS" id="PR00759">
    <property type="entry name" value="BASICPTASE"/>
</dbReference>
<dbReference type="PRINTS" id="PR00204">
    <property type="entry name" value="BETAAMYLOID"/>
</dbReference>
<dbReference type="SMART" id="SM00006">
    <property type="entry name" value="A4_EXTRA"/>
    <property type="match status" value="1"/>
</dbReference>
<dbReference type="SMART" id="SM00131">
    <property type="entry name" value="KU"/>
    <property type="match status" value="1"/>
</dbReference>
<dbReference type="SUPFAM" id="SSF56491">
    <property type="entry name" value="A heparin-binding domain"/>
    <property type="match status" value="1"/>
</dbReference>
<dbReference type="SUPFAM" id="SSF89811">
    <property type="entry name" value="Amyloid beta a4 protein copper binding domain (domain 2)"/>
    <property type="match status" value="1"/>
</dbReference>
<dbReference type="SUPFAM" id="SSF57362">
    <property type="entry name" value="BPTI-like"/>
    <property type="match status" value="1"/>
</dbReference>
<dbReference type="SUPFAM" id="SSF109843">
    <property type="entry name" value="CAPPD, an extracellular domain of amyloid beta A4 protein"/>
    <property type="match status" value="1"/>
</dbReference>
<dbReference type="PROSITE" id="PS00319">
    <property type="entry name" value="APP_CUBD"/>
    <property type="match status" value="1"/>
</dbReference>
<dbReference type="PROSITE" id="PS51869">
    <property type="entry name" value="APP_E1"/>
    <property type="match status" value="1"/>
</dbReference>
<dbReference type="PROSITE" id="PS51870">
    <property type="entry name" value="APP_E2"/>
    <property type="match status" value="1"/>
</dbReference>
<dbReference type="PROSITE" id="PS00320">
    <property type="entry name" value="APP_INTRA"/>
    <property type="match status" value="1"/>
</dbReference>
<dbReference type="PROSITE" id="PS00280">
    <property type="entry name" value="BPTI_KUNITZ_1"/>
    <property type="match status" value="1"/>
</dbReference>
<dbReference type="PROSITE" id="PS50279">
    <property type="entry name" value="BPTI_KUNITZ_2"/>
    <property type="match status" value="1"/>
</dbReference>
<comment type="function">
    <text evidence="1 2">Functions as a cell surface receptor and performs physiological functions on the surface of neurons relevant to neurite growth, neuronal adhesion and axonogenesis. Interaction between APP molecules on neighboring cells promotes synaptogenesis. Involved in cell mobility and transcription regulation through protein-protein interactions (By similarity). Can promote transcription activation through binding to APBB1-KAT5 and inhibit Notch signaling through interaction with Numb (By similarity). Couples to apoptosis-inducing pathways such as those mediated by G(o) and JIP (By similarity). Inhibits G(o)-alpha ATPase activity (By similarity). Acts as a kinesin I membrane receptor, mediating the axonal transport of beta-secretase and presenilin 1 (By similarity). By acting as a kinesin I membrane receptor, plays a role in axonal anterograde transport of cargo towards synapses in axons (By similarity). May be involved in copper homeostasis/oxidative stress through copper ion reduction (By similarity). In vitro, copper-metallated APP induces neuronal death directly or is potentiated through Cu(2+)-mediated low-density lipoprotein oxidation (By similarity). Can regulate neurite outgrowth through binding to components of the extracellular matrix such as heparin and collagen I and IV. Induces a AGER-dependent pathway that involves activation of p38 MAPK, resulting in internalization of amyloid-beta peptide and mitochondrial dysfunction in cultured cortical neurons. Provides Cu(2+) ions for GPC1 which are required for release of nitric oxide (NO) and subsequent degradation of the heparan sulfate chains on GPC1 (By similarity).</text>
</comment>
<comment type="function">
    <text evidence="1">Amyloid-beta peptides are lipophilic metal chelators with metal-reducing activity. Binds transient metals such as copper, zinc and iron (By similarity).</text>
</comment>
<comment type="function">
    <text evidence="1">The gamma-CTF peptides as well as the caspase-cleaved peptides, including C31, are potent enhancers of neuronal apoptosis.</text>
</comment>
<comment type="subunit">
    <text evidence="2 3 4">Binds, via its C-terminus, to the PID domain of several cytoplasmic proteins, including APBB family members, the APBA family, MAPK8IP1, SHC1 and NUMB and DAB1 (By similarity). Binding to DAB1 inhibits its serine phosphorylation (By similarity). Interacts (via NPXY motif) with DAB2 (via PID domain); the interaction is impaired by tyrosine phosphorylation of the NPXY motif. Also interacts with GPCR-like protein BPP, APPBP1, IB1, KNS2 (via its TPR domains), APPBP2 (via BaSS) and DDB1. In vitro, it binds MAPT via the MT-binding domains (By similarity). Associates with microtubules in the presence of ATP and in a kinesin-dependent manner (By similarity). Interacts, through a C-terminal domain, with GNAO1. Amyloid-beta protein 42 binds CHRNA7 in hippocampal neurons (By similarity). Amyloid-beta associates with HADH2 (By similarity). Interacts with CPEB1, ANKS1B and AGER (By similarity). Interacts with ITM2B. Interacts with ITM2C. Interacts with IDE. Can form homodimers; dimerization is enhanced in the presence of Cu(2+) ions. Can form homodimers; this is promoted by heparin binding (By similarity). Amyloid-beta protein 40 interacts with S100A9 (By similarity). CTF-alpha product of APP interacts with GSAP (By similarity). Isoform APP695 interacts with SORL1 (via N-terminal ectodomain); this interaction retains APP in the trans-Golgi network and reduces processing into soluble APP-alpha and amyloid-beta peptides (By similarity). Isoform APP770 interacts with SORL1 (By similarity). The C99 fragment also interacts with SORL1 (By similarity). Interacts with PLD3 (By similarity). Interacts with VDAC1 (By similarity). Interacts with NSG1; could regulate APP processing (By similarity). Amyloid-beta protein 42 interacts with FPR2 (By similarity). Interacts (via transmembrane region) with PSEN1; the interaction is direct (By similarity). Interacts with LRRK2 (By similarity). Interacts (via cytoplasmic domain) with KIF5B (By similarity). Interacts (via C-terminus) with APBB2/FE65L1 (via C-terminus) (By similarity). Interacts (via intracellular domain) with APBB3 (By similarity).</text>
</comment>
<comment type="subcellular location">
    <subcellularLocation>
        <location evidence="2">Cell membrane</location>
        <topology evidence="2">Single-pass type I membrane protein</topology>
    </subcellularLocation>
    <subcellularLocation>
        <location evidence="2">Membrane</location>
        <topology evidence="2">Single-pass type I membrane protein</topology>
    </subcellularLocation>
    <subcellularLocation>
        <location evidence="2">Perikaryon</location>
    </subcellularLocation>
    <subcellularLocation>
        <location evidence="2">Cell projection</location>
        <location evidence="2">Growth cone</location>
    </subcellularLocation>
    <subcellularLocation>
        <location evidence="2">Membrane</location>
        <location evidence="2">Clathrin-coated pit</location>
    </subcellularLocation>
    <subcellularLocation>
        <location evidence="2">Early endosome</location>
    </subcellularLocation>
    <subcellularLocation>
        <location evidence="2">Cytoplasmic vesicle</location>
    </subcellularLocation>
    <text evidence="2">Cell surface protein that rapidly becomes internalized via clathrin-coated pits. Only a minor proportion is present at the cell membrane; most of the protein is present in intracellular vesicles. During maturation, the immature APP (N-glycosylated in the endoplasmic reticulum) moves to the Golgi complex where complete maturation occurs (O-glycosylated and sulfated). After alpha-secretase cleavage, soluble APP is released into the extracellular space and the C-terminal is internalized to endosomes and APP sorts to the basolateral surface in epithelial cells. During neuronal differentiation, the Thr-743 phosphorylated form is located mainly in growth cones, moderately in neurites and sparingly in the cell body. Casein kinase phosphorylation can occur either at the cell surface or within a post-Golgi compartment. Associates with GPC1 in perinuclear compartments. Colocalizes with SORL1 in a vesicular pattern in cytoplasm and perinuclear regions.</text>
</comment>
<comment type="subcellular location">
    <molecule>C83</molecule>
    <subcellularLocation>
        <location evidence="2">Endoplasmic reticulum</location>
    </subcellularLocation>
    <subcellularLocation>
        <location evidence="2">Golgi apparatus</location>
    </subcellularLocation>
    <subcellularLocation>
        <location evidence="2">Early endosome</location>
    </subcellularLocation>
</comment>
<comment type="subcellular location">
    <molecule>C99</molecule>
    <subcellularLocation>
        <location evidence="2">Early endosome</location>
    </subcellularLocation>
</comment>
<comment type="subcellular location">
    <molecule>Soluble APP-beta</molecule>
    <subcellularLocation>
        <location evidence="2">Secreted</location>
    </subcellularLocation>
</comment>
<comment type="subcellular location">
    <molecule>Amyloid-beta protein 42</molecule>
    <subcellularLocation>
        <location evidence="2">Cell surface</location>
    </subcellularLocation>
    <text evidence="2">Associates with FPR2 at the cell surface and the complex is then rapidly internalized.</text>
</comment>
<comment type="subcellular location">
    <molecule>Gamma-secretase C-terminal fragment 59</molecule>
    <subcellularLocation>
        <location evidence="2">Nucleus</location>
    </subcellularLocation>
    <subcellularLocation>
        <location evidence="2">Cytoplasm</location>
    </subcellularLocation>
    <text evidence="2 4">Located to both the cytoplasm and nuclei of neurons. It can be translocated to the nucleus through association with APBB1 (Fe65). In dopaminergic neurons, the phosphorylated Thr-743 form is localized to the nucleus (By similarity).</text>
</comment>
<comment type="alternative products">
    <event type="alternative splicing"/>
    <isoform>
        <id>P53601-1</id>
        <name>APP770</name>
        <sequence type="displayed"/>
    </isoform>
    <isoform>
        <id>P53601-2</id>
        <name>APP695</name>
        <sequence type="described" ref="VSP_000010 VSP_000011"/>
    </isoform>
    <isoform>
        <id>P53601-3</id>
        <name>3</name>
        <sequence type="described" ref="VSP_013360 VSP_013361"/>
    </isoform>
    <text>Additional isoforms seem to exist.</text>
</comment>
<comment type="domain">
    <text evidence="2">The transmembrane helix undergoes a conformation change and unravels partially when bound to PSEN1, facilitating cleavage by PSEN1.</text>
</comment>
<comment type="domain">
    <text evidence="2">The basolateral sorting signal (BaSS) is required for sorting of membrane proteins to the basolateral surface of epithelial cells.</text>
</comment>
<comment type="domain">
    <text evidence="2">The GFLD subdomain binds Cu(2+) ions; this promotes homodimerization.</text>
</comment>
<comment type="domain">
    <text evidence="2">The NPXY sequence motif found in many tyrosine-phosphorylated proteins is required for the specific binding of the PID domain. However, additional amino acids either N- or C-terminal to the NPXY motif are often required for complete interaction. The PID domain-containing proteins which bind APP require the YENPTY motif for full interaction. These interactions are independent of phosphorylation on the terminal tyrosine residue. The YENPXY site is also involved in clathrin-mediated endocytosis.</text>
</comment>
<comment type="domain">
    <text evidence="2">The C-terminal region can bind zinc ions; this favors dimerization and formation of higher oligomers.</text>
</comment>
<comment type="domain">
    <text evidence="2">The OX-2 motif shows some similarity to a region in the N-terminus of CD200/MOX2.</text>
</comment>
<comment type="PTM">
    <text evidence="2">Proteolytically processed under normal cellular conditions. Cleavage either by alpha-secretase, beta-secretase or theta-secretase leads to generation and extracellular release of soluble APP peptides, S-APP-alpha and S-APP-beta, and the retention of corresponding membrane-anchored C-terminal fragments, C80, C83 and C99. Subsequent processing of C80 and C83 by gamma-secretase yields P3 peptides. This is the major secretory pathway and is non-amyloidogenic. Alternatively, presenilin/nicastrin-mediated gamma-secretase processing of C99 releases the amyloid-beta proteins, amyloid-beta protein 40 and amyloid-beta protein 42, major components of amyloid plaques, and the cytotoxic C-terminal fragments, gamma-CTF(50), gamma-CTF(57) and gamma-CTF(59). PSEN1 cleavage is more efficient with C83 than with C99 as substrate (in vitro). Amyloid-beta protein 40 and Amyloid-beta protein 42 are cleaved by ACE. Many other minor amyloid-beta peptides, amyloid-beta 1-X peptides, are found in cerebral spinal fluid (CSF) including the amyloid-beta X-15 peptides, produced from the cleavage by alpha-secretase.</text>
</comment>
<comment type="PTM">
    <text evidence="1">Proteolytically cleaved by caspases during neuronal apoptosis. Cleavage at Asp-739 by either caspase-3, -8 or -9 results in the production of the neurotoxic C31 peptide and the increased production of amyloid-beta peptides.</text>
</comment>
<comment type="PTM">
    <text evidence="1">N- and O-glycosylated.</text>
</comment>
<comment type="PTM">
    <text evidence="2">Phosphorylation in the C-terminal on tyrosine, threonine and serine residues is neuron-specific. Phosphorylation can affect APP processing, neuronal differentiation and interaction with other proteins. Phosphorylated on Thr-743 in neuronal cells by Cdc5 kinase and Mapk10, in dividing cells by Cdc2 kinase in a cell-cycle dependent manner with maximal levels at the G2/M phase and, in vitro, by GSK-3-beta. The Thr-743 phosphorylated form causes a conformational change which reduces binding of Fe65 family members. In dopaminergic (DA) neurons, phosphorylation on Thr-743 by LRKK2 promotes the production and the nuclear translocation of the APP intracellular domain (AICD) which induces DA neuron apoptosis. Phosphorylation on Tyr-757 is required for SHC binding. Phosphorylated in the extracellular domain by casein kinases on both soluble and membrane-bound APP. This phosphorylation is inhibited by heparin.</text>
</comment>
<comment type="PTM">
    <text evidence="1">Trophic-factor deprivation triggers the cleavage of surface APP by beta-secretase to release sAPP-beta which is further cleaved to release an N-terminal fragment of APP (N-APP).</text>
</comment>
<comment type="PTM">
    <text evidence="4">Amyloid-beta peptides are degraded by IDE.</text>
</comment>
<comment type="PTM">
    <text evidence="2">Sulfated on tyrosine residues.</text>
</comment>
<comment type="miscellaneous">
    <text evidence="2">Chelation of metal ions, notably copper, iron and zinc, can induce histidine-bridging between amyloid-beta molecules resulting in amyloid-beta-metal aggregates. Extracellular zinc-binding increases binding of heparin to APP and inhibits collagen-binding.</text>
</comment>
<comment type="similarity">
    <text evidence="7">Belongs to the APP family.</text>
</comment>
<organism>
    <name type="scientific">Macaca fascicularis</name>
    <name type="common">Crab-eating macaque</name>
    <name type="synonym">Cynomolgus monkey</name>
    <dbReference type="NCBI Taxonomy" id="9541"/>
    <lineage>
        <taxon>Eukaryota</taxon>
        <taxon>Metazoa</taxon>
        <taxon>Chordata</taxon>
        <taxon>Craniata</taxon>
        <taxon>Vertebrata</taxon>
        <taxon>Euteleostomi</taxon>
        <taxon>Mammalia</taxon>
        <taxon>Eutheria</taxon>
        <taxon>Euarchontoglires</taxon>
        <taxon>Primates</taxon>
        <taxon>Haplorrhini</taxon>
        <taxon>Catarrhini</taxon>
        <taxon>Cercopithecidae</taxon>
        <taxon>Cercopithecinae</taxon>
        <taxon>Macaca</taxon>
    </lineage>
</organism>
<name>A4_MACFA</name>
<proteinExistence type="evidence at transcript level"/>
<gene>
    <name evidence="2" type="primary">APP</name>
    <name evidence="2" type="synonym">A4</name>
    <name evidence="2" type="synonym">AD1</name>
    <name type="ORF">QccE-15949</name>
</gene>